<sequence length="145" mass="16350">MYLNSLSNSVYKKRSKKRICRGIGSGWGKTGGRGHKGQKSRSGGKIRKSFEGGQTPLYRRIPKFGFRSKKKKFFDEIRLFELDCFHNLKYINLSILKKINLINKNIKYVKIIKSGLINRPIIISGLSVTKGARLCIESAGGVVKS</sequence>
<dbReference type="EMBL" id="CP000263">
    <property type="protein sequence ID" value="ABJ90776.1"/>
    <property type="molecule type" value="Genomic_DNA"/>
</dbReference>
<dbReference type="RefSeq" id="WP_011672695.1">
    <property type="nucleotide sequence ID" value="NC_008513.1"/>
</dbReference>
<dbReference type="SMR" id="Q057C3"/>
<dbReference type="STRING" id="372461.BCc_322"/>
<dbReference type="KEGG" id="bcc:BCc_322"/>
<dbReference type="eggNOG" id="COG0200">
    <property type="taxonomic scope" value="Bacteria"/>
</dbReference>
<dbReference type="HOGENOM" id="CLU_055188_4_2_6"/>
<dbReference type="OrthoDB" id="9810293at2"/>
<dbReference type="Proteomes" id="UP000000669">
    <property type="component" value="Chromosome"/>
</dbReference>
<dbReference type="GO" id="GO:0022625">
    <property type="term" value="C:cytosolic large ribosomal subunit"/>
    <property type="evidence" value="ECO:0007669"/>
    <property type="project" value="TreeGrafter"/>
</dbReference>
<dbReference type="GO" id="GO:0019843">
    <property type="term" value="F:rRNA binding"/>
    <property type="evidence" value="ECO:0007669"/>
    <property type="project" value="UniProtKB-UniRule"/>
</dbReference>
<dbReference type="GO" id="GO:0003735">
    <property type="term" value="F:structural constituent of ribosome"/>
    <property type="evidence" value="ECO:0007669"/>
    <property type="project" value="InterPro"/>
</dbReference>
<dbReference type="GO" id="GO:0006412">
    <property type="term" value="P:translation"/>
    <property type="evidence" value="ECO:0007669"/>
    <property type="project" value="UniProtKB-UniRule"/>
</dbReference>
<dbReference type="Gene3D" id="3.100.10.10">
    <property type="match status" value="1"/>
</dbReference>
<dbReference type="HAMAP" id="MF_01341">
    <property type="entry name" value="Ribosomal_uL15"/>
    <property type="match status" value="1"/>
</dbReference>
<dbReference type="InterPro" id="IPR030878">
    <property type="entry name" value="Ribosomal_uL15"/>
</dbReference>
<dbReference type="InterPro" id="IPR021131">
    <property type="entry name" value="Ribosomal_uL15/eL18"/>
</dbReference>
<dbReference type="InterPro" id="IPR036227">
    <property type="entry name" value="Ribosomal_uL15/eL18_sf"/>
</dbReference>
<dbReference type="InterPro" id="IPR005749">
    <property type="entry name" value="Ribosomal_uL15_bac-type"/>
</dbReference>
<dbReference type="NCBIfam" id="TIGR01071">
    <property type="entry name" value="rplO_bact"/>
    <property type="match status" value="1"/>
</dbReference>
<dbReference type="PANTHER" id="PTHR12934">
    <property type="entry name" value="50S RIBOSOMAL PROTEIN L15"/>
    <property type="match status" value="1"/>
</dbReference>
<dbReference type="PANTHER" id="PTHR12934:SF11">
    <property type="entry name" value="LARGE RIBOSOMAL SUBUNIT PROTEIN UL15M"/>
    <property type="match status" value="1"/>
</dbReference>
<dbReference type="Pfam" id="PF00828">
    <property type="entry name" value="Ribosomal_L27A"/>
    <property type="match status" value="1"/>
</dbReference>
<dbReference type="SUPFAM" id="SSF52080">
    <property type="entry name" value="Ribosomal proteins L15p and L18e"/>
    <property type="match status" value="1"/>
</dbReference>
<comment type="function">
    <text evidence="1">Binds to the 23S rRNA.</text>
</comment>
<comment type="subunit">
    <text evidence="1">Part of the 50S ribosomal subunit.</text>
</comment>
<comment type="similarity">
    <text evidence="1">Belongs to the universal ribosomal protein uL15 family.</text>
</comment>
<organism>
    <name type="scientific">Buchnera aphidicola subsp. Cinara cedri (strain Cc)</name>
    <dbReference type="NCBI Taxonomy" id="372461"/>
    <lineage>
        <taxon>Bacteria</taxon>
        <taxon>Pseudomonadati</taxon>
        <taxon>Pseudomonadota</taxon>
        <taxon>Gammaproteobacteria</taxon>
        <taxon>Enterobacterales</taxon>
        <taxon>Erwiniaceae</taxon>
        <taxon>Buchnera</taxon>
    </lineage>
</organism>
<protein>
    <recommendedName>
        <fullName evidence="1">Large ribosomal subunit protein uL15</fullName>
    </recommendedName>
    <alternativeName>
        <fullName evidence="3">50S ribosomal protein L15</fullName>
    </alternativeName>
</protein>
<evidence type="ECO:0000255" key="1">
    <source>
        <dbReference type="HAMAP-Rule" id="MF_01341"/>
    </source>
</evidence>
<evidence type="ECO:0000256" key="2">
    <source>
        <dbReference type="SAM" id="MobiDB-lite"/>
    </source>
</evidence>
<evidence type="ECO:0000305" key="3"/>
<accession>Q057C3</accession>
<proteinExistence type="inferred from homology"/>
<name>RL15_BUCCC</name>
<gene>
    <name evidence="1" type="primary">rplO</name>
    <name type="ordered locus">BCc_322</name>
</gene>
<feature type="chain" id="PRO_1000054434" description="Large ribosomal subunit protein uL15">
    <location>
        <begin position="1"/>
        <end position="145"/>
    </location>
</feature>
<feature type="region of interest" description="Disordered" evidence="2">
    <location>
        <begin position="23"/>
        <end position="51"/>
    </location>
</feature>
<feature type="compositionally biased region" description="Basic residues" evidence="2">
    <location>
        <begin position="32"/>
        <end position="47"/>
    </location>
</feature>
<keyword id="KW-1185">Reference proteome</keyword>
<keyword id="KW-0687">Ribonucleoprotein</keyword>
<keyword id="KW-0689">Ribosomal protein</keyword>
<keyword id="KW-0694">RNA-binding</keyword>
<keyword id="KW-0699">rRNA-binding</keyword>
<reference key="1">
    <citation type="journal article" date="2006" name="Science">
        <title>A small microbial genome: the end of a long symbiotic relationship?</title>
        <authorList>
            <person name="Perez-Brocal V."/>
            <person name="Gil R."/>
            <person name="Ramos S."/>
            <person name="Lamelas A."/>
            <person name="Postigo M."/>
            <person name="Michelena J.M."/>
            <person name="Silva F.J."/>
            <person name="Moya A."/>
            <person name="Latorre A."/>
        </authorList>
    </citation>
    <scope>NUCLEOTIDE SEQUENCE [LARGE SCALE GENOMIC DNA]</scope>
    <source>
        <strain>Cc</strain>
    </source>
</reference>